<gene>
    <name evidence="1" type="primary">yacG</name>
    <name type="ordered locus">PA14_58790</name>
</gene>
<feature type="chain" id="PRO_1000056981" description="DNA gyrase inhibitor YacG">
    <location>
        <begin position="1"/>
        <end position="66"/>
    </location>
</feature>
<feature type="binding site" evidence="1">
    <location>
        <position position="9"/>
    </location>
    <ligand>
        <name>Zn(2+)</name>
        <dbReference type="ChEBI" id="CHEBI:29105"/>
    </ligand>
</feature>
<feature type="binding site" evidence="1">
    <location>
        <position position="12"/>
    </location>
    <ligand>
        <name>Zn(2+)</name>
        <dbReference type="ChEBI" id="CHEBI:29105"/>
    </ligand>
</feature>
<feature type="binding site" evidence="1">
    <location>
        <position position="28"/>
    </location>
    <ligand>
        <name>Zn(2+)</name>
        <dbReference type="ChEBI" id="CHEBI:29105"/>
    </ligand>
</feature>
<feature type="binding site" evidence="1">
    <location>
        <position position="32"/>
    </location>
    <ligand>
        <name>Zn(2+)</name>
        <dbReference type="ChEBI" id="CHEBI:29105"/>
    </ligand>
</feature>
<keyword id="KW-0479">Metal-binding</keyword>
<keyword id="KW-0862">Zinc</keyword>
<accession>Q02GQ9</accession>
<proteinExistence type="inferred from homology"/>
<sequence>MSQPLTVECPTCGAPVEWKSDNKYRPFCSDRCKLIDLGAWAAEEHAIPGDTLEDDIFSADLPPREH</sequence>
<dbReference type="EMBL" id="CP000438">
    <property type="protein sequence ID" value="ABJ13798.1"/>
    <property type="molecule type" value="Genomic_DNA"/>
</dbReference>
<dbReference type="RefSeq" id="WP_003094656.1">
    <property type="nucleotide sequence ID" value="NZ_CP034244.1"/>
</dbReference>
<dbReference type="SMR" id="Q02GQ9"/>
<dbReference type="GeneID" id="77223033"/>
<dbReference type="KEGG" id="pau:PA14_58790"/>
<dbReference type="PseudoCAP" id="PA14_58790"/>
<dbReference type="HOGENOM" id="CLU_178280_3_2_6"/>
<dbReference type="BioCyc" id="PAER208963:G1G74-4951-MONOMER"/>
<dbReference type="Proteomes" id="UP000000653">
    <property type="component" value="Chromosome"/>
</dbReference>
<dbReference type="GO" id="GO:0008657">
    <property type="term" value="F:DNA topoisomerase type II (double strand cut, ATP-hydrolyzing) inhibitor activity"/>
    <property type="evidence" value="ECO:0007669"/>
    <property type="project" value="UniProtKB-UniRule"/>
</dbReference>
<dbReference type="GO" id="GO:0008270">
    <property type="term" value="F:zinc ion binding"/>
    <property type="evidence" value="ECO:0007669"/>
    <property type="project" value="UniProtKB-UniRule"/>
</dbReference>
<dbReference type="GO" id="GO:0006355">
    <property type="term" value="P:regulation of DNA-templated transcription"/>
    <property type="evidence" value="ECO:0007669"/>
    <property type="project" value="InterPro"/>
</dbReference>
<dbReference type="Gene3D" id="3.30.50.10">
    <property type="entry name" value="Erythroid Transcription Factor GATA-1, subunit A"/>
    <property type="match status" value="1"/>
</dbReference>
<dbReference type="HAMAP" id="MF_00649">
    <property type="entry name" value="DNA_gyrase_inhibitor_YacG"/>
    <property type="match status" value="1"/>
</dbReference>
<dbReference type="InterPro" id="IPR005584">
    <property type="entry name" value="DNA_gyrase_inhibitor_YacG"/>
</dbReference>
<dbReference type="InterPro" id="IPR013088">
    <property type="entry name" value="Znf_NHR/GATA"/>
</dbReference>
<dbReference type="NCBIfam" id="NF001638">
    <property type="entry name" value="PRK00418.1"/>
    <property type="match status" value="1"/>
</dbReference>
<dbReference type="PANTHER" id="PTHR36150">
    <property type="entry name" value="DNA GYRASE INHIBITOR YACG"/>
    <property type="match status" value="1"/>
</dbReference>
<dbReference type="PANTHER" id="PTHR36150:SF1">
    <property type="entry name" value="DNA GYRASE INHIBITOR YACG"/>
    <property type="match status" value="1"/>
</dbReference>
<dbReference type="Pfam" id="PF03884">
    <property type="entry name" value="YacG"/>
    <property type="match status" value="1"/>
</dbReference>
<dbReference type="SUPFAM" id="SSF57716">
    <property type="entry name" value="Glucocorticoid receptor-like (DNA-binding domain)"/>
    <property type="match status" value="1"/>
</dbReference>
<reference key="1">
    <citation type="journal article" date="2006" name="Genome Biol.">
        <title>Genomic analysis reveals that Pseudomonas aeruginosa virulence is combinatorial.</title>
        <authorList>
            <person name="Lee D.G."/>
            <person name="Urbach J.M."/>
            <person name="Wu G."/>
            <person name="Liberati N.T."/>
            <person name="Feinbaum R.L."/>
            <person name="Miyata S."/>
            <person name="Diggins L.T."/>
            <person name="He J."/>
            <person name="Saucier M."/>
            <person name="Deziel E."/>
            <person name="Friedman L."/>
            <person name="Li L."/>
            <person name="Grills G."/>
            <person name="Montgomery K."/>
            <person name="Kucherlapati R."/>
            <person name="Rahme L.G."/>
            <person name="Ausubel F.M."/>
        </authorList>
    </citation>
    <scope>NUCLEOTIDE SEQUENCE [LARGE SCALE GENOMIC DNA]</scope>
    <source>
        <strain>UCBPP-PA14</strain>
    </source>
</reference>
<evidence type="ECO:0000255" key="1">
    <source>
        <dbReference type="HAMAP-Rule" id="MF_00649"/>
    </source>
</evidence>
<comment type="function">
    <text evidence="1">Inhibits all the catalytic activities of DNA gyrase by preventing its interaction with DNA. Acts by binding directly to the C-terminal domain of GyrB, which probably disrupts DNA binding by the gyrase.</text>
</comment>
<comment type="cofactor">
    <cofactor evidence="1">
        <name>Zn(2+)</name>
        <dbReference type="ChEBI" id="CHEBI:29105"/>
    </cofactor>
    <text evidence="1">Binds 1 zinc ion.</text>
</comment>
<comment type="subunit">
    <text evidence="1">Interacts with GyrB.</text>
</comment>
<comment type="similarity">
    <text evidence="1">Belongs to the DNA gyrase inhibitor YacG family.</text>
</comment>
<name>YACG_PSEAB</name>
<protein>
    <recommendedName>
        <fullName evidence="1">DNA gyrase inhibitor YacG</fullName>
    </recommendedName>
</protein>
<organism>
    <name type="scientific">Pseudomonas aeruginosa (strain UCBPP-PA14)</name>
    <dbReference type="NCBI Taxonomy" id="208963"/>
    <lineage>
        <taxon>Bacteria</taxon>
        <taxon>Pseudomonadati</taxon>
        <taxon>Pseudomonadota</taxon>
        <taxon>Gammaproteobacteria</taxon>
        <taxon>Pseudomonadales</taxon>
        <taxon>Pseudomonadaceae</taxon>
        <taxon>Pseudomonas</taxon>
    </lineage>
</organism>